<gene>
    <name type="primary">NS</name>
</gene>
<accession>P0C136</accession>
<accession>P06823</accession>
<accession>Q67405</accession>
<accession>Q84090</accession>
<feature type="chain" id="PRO_0000039178" description="Non-structural protein 1">
    <location>
        <begin position="1"/>
        <end position="241"/>
    </location>
</feature>
<feature type="non-terminal residue">
    <location>
        <position position="1"/>
    </location>
</feature>
<evidence type="ECO:0000250" key="1"/>
<evidence type="ECO:0000269" key="2">
    <source>
    </source>
</evidence>
<evidence type="ECO:0000305" key="3"/>
<keyword id="KW-0025">Alternative splicing</keyword>
<keyword id="KW-1035">Host cytoplasm</keyword>
<keyword id="KW-1048">Host nucleus</keyword>
<protein>
    <recommendedName>
        <fullName>Non-structural protein 1</fullName>
        <shortName>NS1</shortName>
    </recommendedName>
    <alternativeName>
        <fullName>NS1C</fullName>
    </alternativeName>
</protein>
<dbReference type="EMBL" id="D00031">
    <property type="protein sequence ID" value="BAA24038.1"/>
    <property type="status" value="ALT_FRAME"/>
    <property type="molecule type" value="Genomic_RNA"/>
</dbReference>
<dbReference type="GO" id="GO:0030430">
    <property type="term" value="C:host cell cytoplasm"/>
    <property type="evidence" value="ECO:0007669"/>
    <property type="project" value="UniProtKB-SubCell"/>
</dbReference>
<dbReference type="GO" id="GO:0042025">
    <property type="term" value="C:host cell nucleus"/>
    <property type="evidence" value="ECO:0007669"/>
    <property type="project" value="UniProtKB-SubCell"/>
</dbReference>
<dbReference type="InterPro" id="IPR005187">
    <property type="entry name" value="Flu_C_NS1"/>
</dbReference>
<dbReference type="InterPro" id="IPR005188">
    <property type="entry name" value="Flu_C_NS2"/>
</dbReference>
<dbReference type="Pfam" id="PF03506">
    <property type="entry name" value="Flu_C_NS1"/>
    <property type="match status" value="1"/>
</dbReference>
<dbReference type="Pfam" id="PF03555">
    <property type="entry name" value="Flu_C_NS2"/>
    <property type="match status" value="1"/>
</dbReference>
<proteinExistence type="evidence at protein level"/>
<sequence length="241" mass="27160">VKSTNLMAFVATKMLERQEDLDTCTEMQVEKMKTSTKARLRTESSFAPRTWEDAIKDGELLFNGTILQAESPTMTPASVEMKGKKFPIDFAPSNIAPIGQNPIYLSPCIPNFDGNVWEATMYHHRGATLTKTMNCNCFQRTIWCHPNPSRMRLSYAFVLYCRNTKKICGYLIARQVAGIETGIRKCFRCIKSGFVMATDEISLTILQSIKSGAQLDPYWGNETPDIDKTEAYMLSLREAGP</sequence>
<organism>
    <name type="scientific">Influenza C virus (strain C/Johannesburg/1/1966)</name>
    <dbReference type="NCBI Taxonomy" id="100673"/>
    <lineage>
        <taxon>Viruses</taxon>
        <taxon>Riboviria</taxon>
        <taxon>Orthornavirae</taxon>
        <taxon>Negarnaviricota</taxon>
        <taxon>Polyploviricotina</taxon>
        <taxon>Insthoviricetes</taxon>
        <taxon>Articulavirales</taxon>
        <taxon>Orthomyxoviridae</taxon>
        <taxon>Gammainfluenzavirus</taxon>
        <taxon>Gammainfluenzavirus influenzae</taxon>
        <taxon>Influenza C virus</taxon>
    </lineage>
</organism>
<comment type="function">
    <text evidence="2">Suppresses the RNA silencing-based antiviral response in Drosophila cells.</text>
</comment>
<comment type="subcellular location">
    <subcellularLocation>
        <location evidence="1">Host cytoplasm</location>
    </subcellularLocation>
    <subcellularLocation>
        <location evidence="1">Host nucleus</location>
    </subcellularLocation>
</comment>
<comment type="alternative products">
    <event type="alternative splicing"/>
    <isoform>
        <id>P0C136-1</id>
        <name>NS1</name>
        <sequence type="displayed"/>
    </isoform>
    <isoform>
        <id>P0C137-1</id>
        <name>NEP</name>
        <name>NS2</name>
        <sequence type="external"/>
    </isoform>
</comment>
<comment type="sequence caution" evidence="3">
    <conflict type="frameshift">
        <sequence resource="EMBL-CDS" id="BAA24038"/>
    </conflict>
</comment>
<reference key="1">
    <citation type="journal article" date="1986" name="Virology">
        <title>Epidemiology of influenza C virus in man: multiple evolutionary lineages and low rate of change.</title>
        <authorList>
            <person name="Buonagurio D.A."/>
            <person name="Nakada S."/>
            <person name="Fitch W.M."/>
            <person name="Palese P."/>
        </authorList>
    </citation>
    <scope>NUCLEOTIDE SEQUENCE [GENOMIC RNA]</scope>
</reference>
<reference key="2">
    <citation type="journal article" date="2004" name="Proc. Natl. Acad. Sci. U.S.A.">
        <title>Interferon antagonist proteins of influenza and vaccinia viruses are suppressors of RNA silencing.</title>
        <authorList>
            <person name="Li W.-X."/>
            <person name="Li H."/>
            <person name="Lu R."/>
            <person name="Li F."/>
            <person name="Dus M."/>
            <person name="Atkinson P."/>
            <person name="Brydon E.W.A."/>
            <person name="Johnson K.L."/>
            <person name="Garcia-Sastre A."/>
            <person name="Ball L.A."/>
            <person name="Palese P."/>
            <person name="Ding S.-W."/>
        </authorList>
    </citation>
    <scope>FUNCTION AS A SUPPRESSOR OF RNA SILENCING</scope>
</reference>
<organismHost>
    <name type="scientific">Homo sapiens</name>
    <name type="common">Human</name>
    <dbReference type="NCBI Taxonomy" id="9606"/>
</organismHost>
<organismHost>
    <name type="scientific">Sus scrofa</name>
    <name type="common">Pig</name>
    <dbReference type="NCBI Taxonomy" id="9823"/>
</organismHost>
<name>NS1_INCJH</name>